<organismHost>
    <name type="scientific">Acanthamoeba polyphaga</name>
    <name type="common">Amoeba</name>
    <dbReference type="NCBI Taxonomy" id="5757"/>
</organismHost>
<accession>Q5UPP5</accession>
<sequence length="376" mass="45109">MGDFVFCYGSRNKKHLSKYIKQTKHNYRLYLSDDDYIKVKIETRINQKYIIVDFNDSINFIKFIVKEKIYCQMSYKHSCNLFFYQNNYLKYIIHNKHLDAIKIFYKKFIPMVNSVLKFDLLFNYQYSQIDPEILKYIFKHGDLKDTVPLIIGCVYQYPNITIEFMSDIIFIYKHKLVKILSGNKFLDVDFDKIMISIFIFLVPSLEKDDIEFFNFIVDEFRYLLNDIDETKLNDEQLSLLKKFRSEYEILDINDFIYCYTVCDFSTQNEKTYYCPNIFRQMVLSLDNINYLKNNVVPDILEYDIVEYMGVICDFIGTTNPKLINKMLTKARSTEMAQLLIDYGADYEKLYESNKFRECHSSVKKLVRKIIRETSDS</sequence>
<evidence type="ECO:0000305" key="1"/>
<feature type="chain" id="PRO_0000071237" description="Uncharacterized protein L181">
    <location>
        <begin position="1"/>
        <end position="376"/>
    </location>
</feature>
<organism>
    <name type="scientific">Acanthamoeba polyphaga mimivirus</name>
    <name type="common">APMV</name>
    <dbReference type="NCBI Taxonomy" id="212035"/>
    <lineage>
        <taxon>Viruses</taxon>
        <taxon>Varidnaviria</taxon>
        <taxon>Bamfordvirae</taxon>
        <taxon>Nucleocytoviricota</taxon>
        <taxon>Megaviricetes</taxon>
        <taxon>Imitervirales</taxon>
        <taxon>Mimiviridae</taxon>
        <taxon>Megamimivirinae</taxon>
        <taxon>Mimivirus</taxon>
        <taxon>Mimivirus bradfordmassiliense</taxon>
    </lineage>
</organism>
<keyword id="KW-1185">Reference proteome</keyword>
<proteinExistence type="inferred from homology"/>
<name>YL181_MIMIV</name>
<reference key="1">
    <citation type="journal article" date="2004" name="Science">
        <title>The 1.2-megabase genome sequence of Mimivirus.</title>
        <authorList>
            <person name="Raoult D."/>
            <person name="Audic S."/>
            <person name="Robert C."/>
            <person name="Abergel C."/>
            <person name="Renesto P."/>
            <person name="Ogata H."/>
            <person name="La Scola B."/>
            <person name="Susan M."/>
            <person name="Claverie J.-M."/>
        </authorList>
    </citation>
    <scope>NUCLEOTIDE SEQUENCE [LARGE SCALE GENOMIC DNA]</scope>
    <source>
        <strain>Rowbotham-Bradford</strain>
    </source>
</reference>
<dbReference type="EMBL" id="AY653733">
    <property type="protein sequence ID" value="AAV50455.1"/>
    <property type="molecule type" value="Genomic_DNA"/>
</dbReference>
<dbReference type="KEGG" id="vg:9924783"/>
<dbReference type="Proteomes" id="UP000001134">
    <property type="component" value="Genome"/>
</dbReference>
<comment type="similarity">
    <text evidence="1">Belongs to the mimivirus L17x/L18x family.</text>
</comment>
<gene>
    <name type="ordered locus">MIMI_L181</name>
</gene>
<protein>
    <recommendedName>
        <fullName>Uncharacterized protein L181</fullName>
    </recommendedName>
</protein>